<proteinExistence type="evidence at transcript level"/>
<accession>Q9LIH5</accession>
<accession>A0A1I9LRB7</accession>
<accession>Q56XB6</accession>
<keyword id="KW-0238">DNA-binding</keyword>
<keyword id="KW-0479">Metal-binding</keyword>
<keyword id="KW-1185">Reference proteome</keyword>
<keyword id="KW-0862">Zinc</keyword>
<keyword id="KW-0863">Zinc-finger</keyword>
<evidence type="ECO:0000255" key="1">
    <source>
        <dbReference type="PROSITE-ProRule" id="PRU00723"/>
    </source>
</evidence>
<evidence type="ECO:0000256" key="2">
    <source>
        <dbReference type="SAM" id="MobiDB-lite"/>
    </source>
</evidence>
<name>C3H38_ARATH</name>
<sequence length="676" mass="75581">MEMSGLGRKRVSKWDSKEDTHHHHSSVNANSASYYRDKESEPVRFNAESNGEARTRSRVSQNNDNSYFSEQDGTRQQFVRRSGSRSNSRSRSRSRSPVYRARRDAGSYDRHKTRTQVSPTPIREFNKRGSDHLFDQSRSDHYGWEDNIRKPRETKYHTDDFREEAMMEGARSSDYNNTDYPEDNSRIRRRRSEFTGEKETQRRDGGDGEGGFHRSSNIPCKFFAAGTGFCRNGKYCRFSHHVADRKQPQDNNNNFYRQDNNNHTSGHNKWNDVERLDNGRVGGIEVSRASKKGVSESKGNGSSSWIDDMEMSPDWNYGVQALKKPVKEDHSVGIIGQSSQSRVLKDDQRSSGMFSHGGRTMAEKPVAASHQSYSNSVNVAPVETFNQNHNALPYQSSLTAGGSQQVLAAAATNFSVGSNLSNLESGKVYQDNHHSTVEKPVLVQNTVSREQIDQITNISASLAQFLANGQPIPQLEQALQLPLHSESVQPNQATTQSNVVSSNPNQLWGLGMSTGAEGVPAVTASKISNVEEIQEVSLDPKENGDKKTDEASKEEEGKKTGEDTNDAENVVDEDEDGDDDGSDEENKKEKDPKGMRAFKFALVEVVKELLKPAWKEGKLNKDGYKNIVKKVAEKVTGTMQSGNVPQTQEKIDHYLSASKPKLTKLVQAYVGKIKKT</sequence>
<organism>
    <name type="scientific">Arabidopsis thaliana</name>
    <name type="common">Mouse-ear cress</name>
    <dbReference type="NCBI Taxonomy" id="3702"/>
    <lineage>
        <taxon>Eukaryota</taxon>
        <taxon>Viridiplantae</taxon>
        <taxon>Streptophyta</taxon>
        <taxon>Embryophyta</taxon>
        <taxon>Tracheophyta</taxon>
        <taxon>Spermatophyta</taxon>
        <taxon>Magnoliopsida</taxon>
        <taxon>eudicotyledons</taxon>
        <taxon>Gunneridae</taxon>
        <taxon>Pentapetalae</taxon>
        <taxon>rosids</taxon>
        <taxon>malvids</taxon>
        <taxon>Brassicales</taxon>
        <taxon>Brassicaceae</taxon>
        <taxon>Camelineae</taxon>
        <taxon>Arabidopsis</taxon>
    </lineage>
</organism>
<dbReference type="EMBL" id="AP001303">
    <property type="protein sequence ID" value="BAB02222.1"/>
    <property type="molecule type" value="Genomic_DNA"/>
</dbReference>
<dbReference type="EMBL" id="CP002686">
    <property type="protein sequence ID" value="AEE76125.1"/>
    <property type="molecule type" value="Genomic_DNA"/>
</dbReference>
<dbReference type="EMBL" id="CP002686">
    <property type="protein sequence ID" value="ANM65125.1"/>
    <property type="molecule type" value="Genomic_DNA"/>
</dbReference>
<dbReference type="EMBL" id="CP002686">
    <property type="protein sequence ID" value="ANM65126.1"/>
    <property type="molecule type" value="Genomic_DNA"/>
</dbReference>
<dbReference type="EMBL" id="AK175797">
    <property type="protein sequence ID" value="BAD43560.1"/>
    <property type="molecule type" value="mRNA"/>
</dbReference>
<dbReference type="EMBL" id="AK221759">
    <property type="protein sequence ID" value="BAD93829.1"/>
    <property type="molecule type" value="mRNA"/>
</dbReference>
<dbReference type="RefSeq" id="NP_001327119.1">
    <property type="nucleotide sequence ID" value="NM_001338349.1"/>
</dbReference>
<dbReference type="RefSeq" id="NP_001327120.1">
    <property type="nucleotide sequence ID" value="NM_001338350.1"/>
</dbReference>
<dbReference type="RefSeq" id="NP_188494.1">
    <property type="nucleotide sequence ID" value="NM_112750.3"/>
</dbReference>
<dbReference type="SMR" id="Q9LIH5"/>
<dbReference type="BioGRID" id="6728">
    <property type="interactions" value="2"/>
</dbReference>
<dbReference type="FunCoup" id="Q9LIH5">
    <property type="interactions" value="806"/>
</dbReference>
<dbReference type="IntAct" id="Q9LIH5">
    <property type="interactions" value="2"/>
</dbReference>
<dbReference type="STRING" id="3702.Q9LIH5"/>
<dbReference type="GlyGen" id="Q9LIH5">
    <property type="glycosylation" value="3 sites, 1 O-linked glycan (2 sites)"/>
</dbReference>
<dbReference type="iPTMnet" id="Q9LIH5"/>
<dbReference type="PaxDb" id="3702-AT3G18640.1"/>
<dbReference type="ProteomicsDB" id="240301"/>
<dbReference type="EnsemblPlants" id="AT3G18640.1">
    <property type="protein sequence ID" value="AT3G18640.1"/>
    <property type="gene ID" value="AT3G18640"/>
</dbReference>
<dbReference type="EnsemblPlants" id="AT3G18640.2">
    <property type="protein sequence ID" value="AT3G18640.2"/>
    <property type="gene ID" value="AT3G18640"/>
</dbReference>
<dbReference type="EnsemblPlants" id="AT3G18640.3">
    <property type="protein sequence ID" value="AT3G18640.3"/>
    <property type="gene ID" value="AT3G18640"/>
</dbReference>
<dbReference type="GeneID" id="821395"/>
<dbReference type="Gramene" id="AT3G18640.1">
    <property type="protein sequence ID" value="AT3G18640.1"/>
    <property type="gene ID" value="AT3G18640"/>
</dbReference>
<dbReference type="Gramene" id="AT3G18640.2">
    <property type="protein sequence ID" value="AT3G18640.2"/>
    <property type="gene ID" value="AT3G18640"/>
</dbReference>
<dbReference type="Gramene" id="AT3G18640.3">
    <property type="protein sequence ID" value="AT3G18640.3"/>
    <property type="gene ID" value="AT3G18640"/>
</dbReference>
<dbReference type="KEGG" id="ath:AT3G18640"/>
<dbReference type="Araport" id="AT3G18640"/>
<dbReference type="TAIR" id="AT3G18640"/>
<dbReference type="eggNOG" id="ENOG502QQ0W">
    <property type="taxonomic scope" value="Eukaryota"/>
</dbReference>
<dbReference type="HOGENOM" id="CLU_417606_0_0_1"/>
<dbReference type="InParanoid" id="Q9LIH5"/>
<dbReference type="OMA" id="RETRYHH"/>
<dbReference type="PhylomeDB" id="Q9LIH5"/>
<dbReference type="CD-CODE" id="4299E36E">
    <property type="entry name" value="Nucleolus"/>
</dbReference>
<dbReference type="PRO" id="PR:Q9LIH5"/>
<dbReference type="Proteomes" id="UP000006548">
    <property type="component" value="Chromosome 3"/>
</dbReference>
<dbReference type="ExpressionAtlas" id="Q9LIH5">
    <property type="expression patterns" value="baseline and differential"/>
</dbReference>
<dbReference type="GO" id="GO:0003677">
    <property type="term" value="F:DNA binding"/>
    <property type="evidence" value="ECO:0007669"/>
    <property type="project" value="UniProtKB-KW"/>
</dbReference>
<dbReference type="GO" id="GO:0008270">
    <property type="term" value="F:zinc ion binding"/>
    <property type="evidence" value="ECO:0007669"/>
    <property type="project" value="UniProtKB-KW"/>
</dbReference>
<dbReference type="InterPro" id="IPR052650">
    <property type="entry name" value="Zinc_finger_CCCH"/>
</dbReference>
<dbReference type="InterPro" id="IPR000571">
    <property type="entry name" value="Znf_CCCH"/>
</dbReference>
<dbReference type="PANTHER" id="PTHR36886">
    <property type="entry name" value="PROTEIN FRIGIDA-ESSENTIAL 1"/>
    <property type="match status" value="1"/>
</dbReference>
<dbReference type="PANTHER" id="PTHR36886:SF8">
    <property type="entry name" value="ZINC FINGER CCCH DOMAIN-CONTAINING PROTEIN 38"/>
    <property type="match status" value="1"/>
</dbReference>
<dbReference type="PROSITE" id="PS50103">
    <property type="entry name" value="ZF_C3H1"/>
    <property type="match status" value="1"/>
</dbReference>
<gene>
    <name type="ordered locus">At3g18640</name>
    <name type="ORF">K24M9.13</name>
</gene>
<protein>
    <recommendedName>
        <fullName>Zinc finger CCCH domain-containing protein 38</fullName>
        <shortName>AtC3H38</shortName>
    </recommendedName>
</protein>
<reference key="1">
    <citation type="journal article" date="2000" name="DNA Res.">
        <title>Structural analysis of Arabidopsis thaliana chromosome 3. II. Sequence features of the 4,251,695 bp regions covered by 90 P1, TAC and BAC clones.</title>
        <authorList>
            <person name="Kaneko T."/>
            <person name="Katoh T."/>
            <person name="Sato S."/>
            <person name="Nakamura Y."/>
            <person name="Asamizu E."/>
            <person name="Tabata S."/>
        </authorList>
    </citation>
    <scope>NUCLEOTIDE SEQUENCE [LARGE SCALE GENOMIC DNA]</scope>
    <source>
        <strain>cv. Columbia</strain>
    </source>
</reference>
<reference key="2">
    <citation type="journal article" date="2017" name="Plant J.">
        <title>Araport11: a complete reannotation of the Arabidopsis thaliana reference genome.</title>
        <authorList>
            <person name="Cheng C.Y."/>
            <person name="Krishnakumar V."/>
            <person name="Chan A.P."/>
            <person name="Thibaud-Nissen F."/>
            <person name="Schobel S."/>
            <person name="Town C.D."/>
        </authorList>
    </citation>
    <scope>GENOME REANNOTATION</scope>
    <source>
        <strain>cv. Columbia</strain>
    </source>
</reference>
<reference key="3">
    <citation type="submission" date="2005-03" db="EMBL/GenBank/DDBJ databases">
        <title>Large-scale analysis of RIKEN Arabidopsis full-length (RAFL) cDNAs.</title>
        <authorList>
            <person name="Totoki Y."/>
            <person name="Seki M."/>
            <person name="Ishida J."/>
            <person name="Nakajima M."/>
            <person name="Enju A."/>
            <person name="Kamiya A."/>
            <person name="Narusaka M."/>
            <person name="Shin-i T."/>
            <person name="Nakagawa M."/>
            <person name="Sakamoto N."/>
            <person name="Oishi K."/>
            <person name="Kohara Y."/>
            <person name="Kobayashi M."/>
            <person name="Toyoda A."/>
            <person name="Sakaki Y."/>
            <person name="Sakurai T."/>
            <person name="Iida K."/>
            <person name="Akiyama K."/>
            <person name="Satou M."/>
            <person name="Toyoda T."/>
            <person name="Konagaya A."/>
            <person name="Carninci P."/>
            <person name="Kawai J."/>
            <person name="Hayashizaki Y."/>
            <person name="Shinozaki K."/>
        </authorList>
    </citation>
    <scope>NUCLEOTIDE SEQUENCE [LARGE SCALE MRNA]</scope>
    <source>
        <strain>cv. Columbia</strain>
    </source>
</reference>
<reference key="4">
    <citation type="journal article" date="2008" name="BMC Genomics">
        <title>Genome-wide analysis of CCCH zinc finger family in Arabidopsis and rice.</title>
        <authorList>
            <person name="Wang D."/>
            <person name="Guo Y."/>
            <person name="Wu C."/>
            <person name="Yang G."/>
            <person name="Li Y."/>
            <person name="Zheng C."/>
        </authorList>
    </citation>
    <scope>NOMENCLATURE</scope>
</reference>
<feature type="chain" id="PRO_0000371993" description="Zinc finger CCCH domain-containing protein 38">
    <location>
        <begin position="1"/>
        <end position="676"/>
    </location>
</feature>
<feature type="zinc finger region" description="C3H1-type" evidence="1">
    <location>
        <begin position="214"/>
        <end position="243"/>
    </location>
</feature>
<feature type="region of interest" description="Disordered" evidence="2">
    <location>
        <begin position="1"/>
        <end position="134"/>
    </location>
</feature>
<feature type="region of interest" description="Disordered" evidence="2">
    <location>
        <begin position="172"/>
        <end position="217"/>
    </location>
</feature>
<feature type="region of interest" description="Disordered" evidence="2">
    <location>
        <begin position="245"/>
        <end position="307"/>
    </location>
</feature>
<feature type="region of interest" description="Disordered" evidence="2">
    <location>
        <begin position="487"/>
        <end position="506"/>
    </location>
</feature>
<feature type="region of interest" description="Disordered" evidence="2">
    <location>
        <begin position="533"/>
        <end position="594"/>
    </location>
</feature>
<feature type="compositionally biased region" description="Basic and acidic residues" evidence="2">
    <location>
        <begin position="12"/>
        <end position="21"/>
    </location>
</feature>
<feature type="compositionally biased region" description="Polar residues" evidence="2">
    <location>
        <begin position="58"/>
        <end position="79"/>
    </location>
</feature>
<feature type="compositionally biased region" description="Basic and acidic residues" evidence="2">
    <location>
        <begin position="101"/>
        <end position="110"/>
    </location>
</feature>
<feature type="compositionally biased region" description="Basic and acidic residues" evidence="2">
    <location>
        <begin position="124"/>
        <end position="134"/>
    </location>
</feature>
<feature type="compositionally biased region" description="Basic and acidic residues" evidence="2">
    <location>
        <begin position="192"/>
        <end position="212"/>
    </location>
</feature>
<feature type="compositionally biased region" description="Low complexity" evidence="2">
    <location>
        <begin position="251"/>
        <end position="262"/>
    </location>
</feature>
<feature type="compositionally biased region" description="Basic and acidic residues" evidence="2">
    <location>
        <begin position="269"/>
        <end position="278"/>
    </location>
</feature>
<feature type="compositionally biased region" description="Basic and acidic residues" evidence="2">
    <location>
        <begin position="538"/>
        <end position="562"/>
    </location>
</feature>
<feature type="compositionally biased region" description="Acidic residues" evidence="2">
    <location>
        <begin position="563"/>
        <end position="583"/>
    </location>
</feature>
<feature type="compositionally biased region" description="Basic and acidic residues" evidence="2">
    <location>
        <begin position="584"/>
        <end position="594"/>
    </location>
</feature>